<protein>
    <recommendedName>
        <fullName>Versatile peroxidase VPL2</fullName>
        <ecNumber evidence="5 6 7">1.11.1.16</ecNumber>
    </recommendedName>
    <alternativeName>
        <fullName>Versatile liquid phase peroxidase 2</fullName>
    </alternativeName>
</protein>
<comment type="function">
    <text evidence="7">A versatile ligninolytic peroxidase that combines the substrate specificity characteristics of the two other ligninolytic peroxidases, manganese peroxidase and lignin peroxidase.</text>
</comment>
<comment type="catalytic activity">
    <reaction evidence="5 6 7">
        <text>1-(4-hydroxy-3-methoxyphenyl)-2-(2-methoxyphenoxy)propane-1,3-diol + H2O2 = guaiacol + vanillin + glycolaldehyde + H2O</text>
        <dbReference type="Rhea" id="RHEA:22396"/>
        <dbReference type="ChEBI" id="CHEBI:15377"/>
        <dbReference type="ChEBI" id="CHEBI:16240"/>
        <dbReference type="ChEBI" id="CHEBI:17071"/>
        <dbReference type="ChEBI" id="CHEBI:18346"/>
        <dbReference type="ChEBI" id="CHEBI:28591"/>
        <dbReference type="ChEBI" id="CHEBI:53650"/>
        <dbReference type="EC" id="1.11.1.16"/>
    </reaction>
</comment>
<comment type="catalytic activity">
    <reaction evidence="5 6 7">
        <text>2 Mn(2+) + H2O2 + 2 H(+) = 2 Mn(3+) + 2 H2O</text>
        <dbReference type="Rhea" id="RHEA:22776"/>
        <dbReference type="ChEBI" id="CHEBI:15377"/>
        <dbReference type="ChEBI" id="CHEBI:15378"/>
        <dbReference type="ChEBI" id="CHEBI:16240"/>
        <dbReference type="ChEBI" id="CHEBI:29035"/>
        <dbReference type="ChEBI" id="CHEBI:29041"/>
        <dbReference type="EC" id="1.11.1.16"/>
    </reaction>
</comment>
<comment type="cofactor">
    <cofactor evidence="3 5">
        <name>heme b</name>
        <dbReference type="ChEBI" id="CHEBI:60344"/>
    </cofactor>
    <text evidence="3 5">Binds 1 heme b (iron(II)-protoporphyrin IX) group per subunit.</text>
</comment>
<comment type="cofactor">
    <cofactor evidence="3 5">
        <name>Ca(2+)</name>
        <dbReference type="ChEBI" id="CHEBI:29108"/>
    </cofactor>
    <text evidence="3 5">Binds 2 calcium ions per subunit.</text>
</comment>
<comment type="biophysicochemical properties">
    <kinetics>
        <KM evidence="5">19 uM for manganese</KM>
        <KM evidence="5">3000 uM for veratryl alcohol</KM>
        <KM evidence="5">4 uM for reactive black 5</KM>
        <KM evidence="5">3 uM for 2,2'-azinobis(3-ethylbenzothiazoline-6-sulfonate) (ABTS)</KM>
    </kinetics>
</comment>
<comment type="subcellular location">
    <subcellularLocation>
        <location evidence="3 7">Secreted</location>
    </subcellularLocation>
</comment>
<comment type="similarity">
    <text evidence="8">Belongs to the peroxidase family. Ligninase subfamily.</text>
</comment>
<proteinExistence type="evidence at protein level"/>
<organism>
    <name type="scientific">Pleurotus eryngii</name>
    <name type="common">Boletus of the steppes</name>
    <dbReference type="NCBI Taxonomy" id="5323"/>
    <lineage>
        <taxon>Eukaryota</taxon>
        <taxon>Fungi</taxon>
        <taxon>Dikarya</taxon>
        <taxon>Basidiomycota</taxon>
        <taxon>Agaricomycotina</taxon>
        <taxon>Agaricomycetes</taxon>
        <taxon>Agaricomycetidae</taxon>
        <taxon>Agaricales</taxon>
        <taxon>Pleurotineae</taxon>
        <taxon>Pleurotaceae</taxon>
        <taxon>Pleurotus</taxon>
    </lineage>
</organism>
<sequence>MSFKTLSALALALGAAVQFASAAVPLVQKRATCDDGRTTANAACCILFPILDDIQENLFDGAQCGEEVHESLRLTFHDAIGFSPTLGGGGADGSIIAFDTIETNFPANAGIDEIVSAQKPFVAKHNISAGDFIQFAGAVGVSNCPGGVRIPFFLGRPDAVAASPDHLVPEPFDSVDSILARMGDAGFSPVEVVWLLASHSIAAADKVDPSIPGTPFDSTPGVFDSQFFIETQLKGRLFPGTADNKGEAQSPLQGEIRLQSDHLLARDPQTACEWQSMVNNQPKIQNRFAATMSKMALLGQDKTKLIDCSDVIPTPPALVGAAHLPAGFSLSDVEQACAATPFPALTADPGPVTSVPPVPGS</sequence>
<gene>
    <name type="primary">vpl2</name>
</gene>
<accession>O94753</accession>
<feature type="signal peptide" evidence="2">
    <location>
        <begin position="1"/>
        <end position="22"/>
    </location>
</feature>
<feature type="propeptide" id="PRO_0000308171" evidence="7">
    <location>
        <begin position="23"/>
        <end position="30"/>
    </location>
</feature>
<feature type="chain" id="PRO_5000053247" description="Versatile peroxidase VPL2">
    <location>
        <begin position="31"/>
        <end position="361"/>
    </location>
</feature>
<feature type="active site" description="Proton acceptor" evidence="3 4">
    <location>
        <position position="77"/>
    </location>
</feature>
<feature type="active site" description="Tryptophan radical intermediate" evidence="6">
    <location>
        <position position="194"/>
    </location>
</feature>
<feature type="binding site" evidence="6">
    <location>
        <position position="66"/>
    </location>
    <ligand>
        <name>Mn(2+)</name>
        <dbReference type="ChEBI" id="CHEBI:29035"/>
    </ligand>
</feature>
<feature type="binding site" evidence="1">
    <location>
        <position position="70"/>
    </location>
    <ligand>
        <name>Mn(2+)</name>
        <dbReference type="ChEBI" id="CHEBI:29035"/>
    </ligand>
</feature>
<feature type="binding site">
    <location>
        <position position="78"/>
    </location>
    <ligand>
        <name>Ca(2+)</name>
        <dbReference type="ChEBI" id="CHEBI:29108"/>
        <label>1</label>
    </ligand>
</feature>
<feature type="binding site">
    <location>
        <position position="90"/>
    </location>
    <ligand>
        <name>Ca(2+)</name>
        <dbReference type="ChEBI" id="CHEBI:29108"/>
        <label>1</label>
    </ligand>
</feature>
<feature type="binding site">
    <location>
        <position position="92"/>
    </location>
    <ligand>
        <name>Ca(2+)</name>
        <dbReference type="ChEBI" id="CHEBI:29108"/>
        <label>1</label>
    </ligand>
</feature>
<feature type="binding site">
    <location>
        <position position="94"/>
    </location>
    <ligand>
        <name>Ca(2+)</name>
        <dbReference type="ChEBI" id="CHEBI:29108"/>
        <label>1</label>
    </ligand>
</feature>
<feature type="binding site" description="axial binding residue">
    <location>
        <position position="199"/>
    </location>
    <ligand>
        <name>heme b</name>
        <dbReference type="ChEBI" id="CHEBI:60344"/>
    </ligand>
    <ligandPart>
        <name>Fe</name>
        <dbReference type="ChEBI" id="CHEBI:18248"/>
    </ligandPart>
</feature>
<feature type="binding site">
    <location>
        <position position="200"/>
    </location>
    <ligand>
        <name>Ca(2+)</name>
        <dbReference type="ChEBI" id="CHEBI:29108"/>
        <label>2</label>
    </ligand>
</feature>
<feature type="binding site">
    <location>
        <begin position="203"/>
        <end position="207"/>
    </location>
    <ligand>
        <name>heme b</name>
        <dbReference type="ChEBI" id="CHEBI:60344"/>
    </ligand>
</feature>
<feature type="binding site" evidence="6">
    <location>
        <position position="205"/>
    </location>
    <ligand>
        <name>Mn(2+)</name>
        <dbReference type="ChEBI" id="CHEBI:29035"/>
    </ligand>
</feature>
<feature type="binding site">
    <location>
        <position position="217"/>
    </location>
    <ligand>
        <name>Ca(2+)</name>
        <dbReference type="ChEBI" id="CHEBI:29108"/>
        <label>2</label>
    </ligand>
</feature>
<feature type="binding site">
    <location>
        <position position="219"/>
    </location>
    <ligand>
        <name>Ca(2+)</name>
        <dbReference type="ChEBI" id="CHEBI:29108"/>
        <label>2</label>
    </ligand>
</feature>
<feature type="binding site">
    <location>
        <position position="222"/>
    </location>
    <ligand>
        <name>Ca(2+)</name>
        <dbReference type="ChEBI" id="CHEBI:29108"/>
        <label>2</label>
    </ligand>
</feature>
<feature type="binding site">
    <location>
        <position position="224"/>
    </location>
    <ligand>
        <name>Ca(2+)</name>
        <dbReference type="ChEBI" id="CHEBI:29108"/>
        <label>2</label>
    </ligand>
</feature>
<feature type="site" description="Transition state stabilizer" evidence="3">
    <location>
        <position position="73"/>
    </location>
</feature>
<feature type="glycosylation site" description="N-linked (GlcNAc...) asparagine" evidence="2">
    <location>
        <position position="126"/>
    </location>
</feature>
<feature type="disulfide bond" evidence="3 6">
    <location>
        <begin position="33"/>
        <end position="45"/>
    </location>
</feature>
<feature type="disulfide bond" evidence="3 6">
    <location>
        <begin position="44"/>
        <end position="308"/>
    </location>
</feature>
<feature type="disulfide bond" evidence="3 6">
    <location>
        <begin position="64"/>
        <end position="144"/>
    </location>
</feature>
<feature type="disulfide bond" evidence="3 6">
    <location>
        <begin position="272"/>
        <end position="337"/>
    </location>
</feature>
<feature type="mutagenesis site" description="Minor effects on activity." evidence="6">
    <original>P</original>
    <variation>H</variation>
    <location>
        <position position="106"/>
    </location>
</feature>
<feature type="mutagenesis site" description="Complete loss of activity toward veratryl alcohol and reactive black 5. No effect on manganese oxidation." evidence="6">
    <original>W</original>
    <variation>H</variation>
    <variation>S</variation>
    <location>
        <position position="194"/>
    </location>
</feature>
<feature type="mutagenesis site" description="Complete loss of oxidation activity toward manganese." evidence="5">
    <original>D</original>
    <variation>A</variation>
    <location>
        <position position="205"/>
    </location>
</feature>
<feature type="mutagenesis site" description="Minor effects on activity." evidence="6">
    <original>H</original>
    <variation>F</variation>
    <location>
        <position position="262"/>
    </location>
</feature>
<feature type="strand" evidence="10">
    <location>
        <begin position="34"/>
        <end position="36"/>
    </location>
</feature>
<feature type="helix" evidence="9">
    <location>
        <begin position="42"/>
        <end position="46"/>
    </location>
</feature>
<feature type="helix" evidence="9">
    <location>
        <begin position="47"/>
        <end position="57"/>
    </location>
</feature>
<feature type="turn" evidence="9">
    <location>
        <begin position="60"/>
        <end position="62"/>
    </location>
</feature>
<feature type="helix" evidence="9">
    <location>
        <begin position="66"/>
        <end position="79"/>
    </location>
</feature>
<feature type="turn" evidence="9">
    <location>
        <begin position="84"/>
        <end position="86"/>
    </location>
</feature>
<feature type="strand" evidence="9">
    <location>
        <begin position="90"/>
        <end position="93"/>
    </location>
</feature>
<feature type="helix" evidence="9">
    <location>
        <begin position="94"/>
        <end position="97"/>
    </location>
</feature>
<feature type="helix" evidence="9">
    <location>
        <begin position="99"/>
        <end position="102"/>
    </location>
</feature>
<feature type="helix" evidence="9">
    <location>
        <begin position="106"/>
        <end position="108"/>
    </location>
</feature>
<feature type="turn" evidence="9">
    <location>
        <begin position="109"/>
        <end position="111"/>
    </location>
</feature>
<feature type="helix" evidence="9">
    <location>
        <begin position="112"/>
        <end position="124"/>
    </location>
</feature>
<feature type="strand" evidence="9">
    <location>
        <begin position="125"/>
        <end position="127"/>
    </location>
</feature>
<feature type="helix" evidence="9">
    <location>
        <begin position="129"/>
        <end position="142"/>
    </location>
</feature>
<feature type="helix" evidence="9">
    <location>
        <begin position="175"/>
        <end position="184"/>
    </location>
</feature>
<feature type="helix" evidence="9">
    <location>
        <begin position="189"/>
        <end position="195"/>
    </location>
</feature>
<feature type="helix" evidence="9">
    <location>
        <begin position="196"/>
        <end position="201"/>
    </location>
</feature>
<feature type="strand" evidence="9">
    <location>
        <begin position="203"/>
        <end position="208"/>
    </location>
</feature>
<feature type="strand" evidence="9">
    <location>
        <begin position="214"/>
        <end position="218"/>
    </location>
</feature>
<feature type="helix" evidence="9">
    <location>
        <begin position="226"/>
        <end position="230"/>
    </location>
</feature>
<feature type="strand" evidence="12">
    <location>
        <begin position="239"/>
        <end position="242"/>
    </location>
</feature>
<feature type="strand" evidence="9">
    <location>
        <begin position="250"/>
        <end position="252"/>
    </location>
</feature>
<feature type="helix" evidence="9">
    <location>
        <begin position="259"/>
        <end position="266"/>
    </location>
</feature>
<feature type="turn" evidence="9">
    <location>
        <begin position="268"/>
        <end position="270"/>
    </location>
</feature>
<feature type="helix" evidence="9">
    <location>
        <begin position="271"/>
        <end position="276"/>
    </location>
</feature>
<feature type="turn" evidence="9">
    <location>
        <begin position="277"/>
        <end position="279"/>
    </location>
</feature>
<feature type="helix" evidence="9">
    <location>
        <begin position="281"/>
        <end position="296"/>
    </location>
</feature>
<feature type="turn" evidence="9">
    <location>
        <begin position="297"/>
        <end position="299"/>
    </location>
</feature>
<feature type="helix" evidence="9">
    <location>
        <begin position="302"/>
        <end position="304"/>
    </location>
</feature>
<feature type="strand" evidence="9">
    <location>
        <begin position="305"/>
        <end position="307"/>
    </location>
</feature>
<feature type="helix" evidence="9">
    <location>
        <begin position="309"/>
        <end position="311"/>
    </location>
</feature>
<feature type="helix" evidence="9">
    <location>
        <begin position="330"/>
        <end position="332"/>
    </location>
</feature>
<feature type="strand" evidence="11">
    <location>
        <begin position="338"/>
        <end position="340"/>
    </location>
</feature>
<feature type="strand" evidence="13">
    <location>
        <begin position="349"/>
        <end position="351"/>
    </location>
</feature>
<name>VPL2_PLEER</name>
<keyword id="KW-0002">3D-structure</keyword>
<keyword id="KW-0106">Calcium</keyword>
<keyword id="KW-0903">Direct protein sequencing</keyword>
<keyword id="KW-1015">Disulfide bond</keyword>
<keyword id="KW-0325">Glycoprotein</keyword>
<keyword id="KW-0349">Heme</keyword>
<keyword id="KW-0376">Hydrogen peroxide</keyword>
<keyword id="KW-0408">Iron</keyword>
<keyword id="KW-0439">Lignin degradation</keyword>
<keyword id="KW-0464">Manganese</keyword>
<keyword id="KW-0479">Metal-binding</keyword>
<keyword id="KW-0556">Organic radical</keyword>
<keyword id="KW-0560">Oxidoreductase</keyword>
<keyword id="KW-0575">Peroxidase</keyword>
<keyword id="KW-0964">Secreted</keyword>
<keyword id="KW-0732">Signal</keyword>
<keyword id="KW-0865">Zymogen</keyword>
<reference key="1">
    <citation type="journal article" date="1999" name="Mol. Microbiol.">
        <title>Molecular characterization of a novel peroxidase isolated from the ligninolytic fungus Pleurotus eryngii.</title>
        <authorList>
            <person name="Ruiz-Duenas F.J."/>
            <person name="Martinez M.J."/>
            <person name="Martinez A.T."/>
        </authorList>
    </citation>
    <scope>NUCLEOTIDE SEQUENCE [GENOMIC DNA / MRNA]</scope>
    <scope>PROTEIN SEQUENCE OF 31-47</scope>
    <scope>FUNCTION</scope>
    <scope>CATALYTIC ACTIVITY</scope>
    <scope>SUBCELLULAR LOCATION</scope>
    <source>
        <strain>ATCC 90787 / CBS 613.91 / IJFM A169 / KCTC 26061</strain>
    </source>
</reference>
<reference key="2">
    <citation type="journal article" date="2003" name="J. Biol. Inorg. Chem.">
        <title>NMR study of manganese(II) binding by a new versatile peroxidase from the white-rot fungus Pleurotus eryngii.</title>
        <authorList>
            <person name="Banci L."/>
            <person name="Camarero S."/>
            <person name="Martinez A.T."/>
            <person name="Martinez M.J."/>
            <person name="Perez-Boada M."/>
            <person name="Pierattelli R."/>
            <person name="Ruiz-Duenas F.J."/>
        </authorList>
    </citation>
    <scope>STRUCTURE BY NMR</scope>
    <scope>CATALYTIC ACTIVITY</scope>
    <scope>BIOPHYSICOCHEMICAL PROPERTIES</scope>
    <scope>COFACTOR</scope>
    <scope>MUTAGENESIS OF ASP-205</scope>
    <source>
        <strain>ATCC 90787 / CBS 613.91 / IJFM A169 / KCTC 26061</strain>
    </source>
</reference>
<reference key="3">
    <citation type="journal article" date="2005" name="J. Mol. Biol.">
        <title>Versatile peroxidase oxidation of high redox potential aromatic compounds: site-directed mutagenesis, spectroscopic and crystallographic investigation of three long-range electron transfer pathways.</title>
        <authorList>
            <person name="Perez-Boada M."/>
            <person name="Ruiz-Duenas F.J."/>
            <person name="Pogni R."/>
            <person name="Basosi R."/>
            <person name="Choinowski T."/>
            <person name="Martinez M.J."/>
            <person name="Piontek K."/>
            <person name="Martinez A.T."/>
        </authorList>
    </citation>
    <scope>X-RAY CRYSTALLOGRAPHY (1.33 ANGSTROMS) OF 31-361 OF WILD-TYPE AND MUTANT SER-194 IN COMPLEX WITH HEME; MANGANESE AND CALCIUM IONS</scope>
    <scope>DISULFIDE BONDS</scope>
    <scope>RADICAL INTERMEDIATE</scope>
    <scope>CATALYTIC ACTIVITY</scope>
    <scope>CATALYTIC MECHANISM</scope>
    <scope>MUTAGENESIS OF PRO-106; TRP-194 AND HIS-262</scope>
    <source>
        <strain>ATCC 90787 / CBS 613.91 / IJFM A169 / KCTC 26061</strain>
    </source>
</reference>
<dbReference type="EC" id="1.11.1.16" evidence="5 6 7"/>
<dbReference type="EMBL" id="AF007222">
    <property type="protein sequence ID" value="AAD01402.1"/>
    <property type="molecule type" value="mRNA"/>
</dbReference>
<dbReference type="EMBL" id="AF007224">
    <property type="protein sequence ID" value="AAD01404.1"/>
    <property type="molecule type" value="Genomic_DNA"/>
</dbReference>
<dbReference type="PDB" id="2BOQ">
    <property type="method" value="X-ray"/>
    <property type="resolution" value="1.33 A"/>
    <property type="chains" value="A=31-361"/>
</dbReference>
<dbReference type="PDB" id="2VKA">
    <property type="method" value="X-ray"/>
    <property type="resolution" value="2.00 A"/>
    <property type="chains" value="A=31-347"/>
</dbReference>
<dbReference type="PDB" id="2W23">
    <property type="method" value="X-ray"/>
    <property type="resolution" value="1.94 A"/>
    <property type="chains" value="A=31-346"/>
</dbReference>
<dbReference type="PDB" id="3FJW">
    <property type="method" value="X-ray"/>
    <property type="resolution" value="2.80 A"/>
    <property type="chains" value="A/B=31-361"/>
</dbReference>
<dbReference type="PDB" id="3FKG">
    <property type="method" value="X-ray"/>
    <property type="resolution" value="1.81 A"/>
    <property type="chains" value="A=31-361"/>
</dbReference>
<dbReference type="PDB" id="3FM1">
    <property type="method" value="X-ray"/>
    <property type="resolution" value="1.78 A"/>
    <property type="chains" value="A=31-361"/>
</dbReference>
<dbReference type="PDB" id="3FM4">
    <property type="method" value="X-ray"/>
    <property type="resolution" value="2.11 A"/>
    <property type="chains" value="A=31-361"/>
</dbReference>
<dbReference type="PDB" id="3FM6">
    <property type="method" value="X-ray"/>
    <property type="resolution" value="1.13 A"/>
    <property type="chains" value="A=31-361"/>
</dbReference>
<dbReference type="PDB" id="3FMU">
    <property type="method" value="X-ray"/>
    <property type="resolution" value="1.04 A"/>
    <property type="chains" value="A=31-361"/>
</dbReference>
<dbReference type="PDB" id="4FCN">
    <property type="method" value="X-ray"/>
    <property type="resolution" value="1.70 A"/>
    <property type="chains" value="A=31-349"/>
</dbReference>
<dbReference type="PDB" id="4FCS">
    <property type="method" value="X-ray"/>
    <property type="resolution" value="1.50 A"/>
    <property type="chains" value="A=31-345"/>
</dbReference>
<dbReference type="PDB" id="4FDQ">
    <property type="method" value="X-ray"/>
    <property type="resolution" value="1.60 A"/>
    <property type="chains" value="A=31-345"/>
</dbReference>
<dbReference type="PDB" id="4FEF">
    <property type="method" value="X-ray"/>
    <property type="resolution" value="2.00 A"/>
    <property type="chains" value="A=31-345"/>
</dbReference>
<dbReference type="PDB" id="4G05">
    <property type="method" value="X-ray"/>
    <property type="resolution" value="2.35 A"/>
    <property type="chains" value="A=31-347"/>
</dbReference>
<dbReference type="PDB" id="5ABN">
    <property type="method" value="X-ray"/>
    <property type="resolution" value="2.19 A"/>
    <property type="chains" value="A=31-361"/>
</dbReference>
<dbReference type="PDB" id="5ABO">
    <property type="method" value="X-ray"/>
    <property type="resolution" value="1.09 A"/>
    <property type="chains" value="A=33-361"/>
</dbReference>
<dbReference type="PDB" id="5ABQ">
    <property type="method" value="X-ray"/>
    <property type="resolution" value="2.29 A"/>
    <property type="chains" value="A=33-361"/>
</dbReference>
<dbReference type="PDB" id="5FNB">
    <property type="method" value="X-ray"/>
    <property type="resolution" value="1.79 A"/>
    <property type="chains" value="A/B=31-359"/>
</dbReference>
<dbReference type="PDB" id="5FNE">
    <property type="method" value="X-ray"/>
    <property type="resolution" value="1.50 A"/>
    <property type="chains" value="A=31-359"/>
</dbReference>
<dbReference type="PDBsum" id="2BOQ"/>
<dbReference type="PDBsum" id="2VKA"/>
<dbReference type="PDBsum" id="2W23"/>
<dbReference type="PDBsum" id="3FJW"/>
<dbReference type="PDBsum" id="3FKG"/>
<dbReference type="PDBsum" id="3FM1"/>
<dbReference type="PDBsum" id="3FM4"/>
<dbReference type="PDBsum" id="3FM6"/>
<dbReference type="PDBsum" id="3FMU"/>
<dbReference type="PDBsum" id="4FCN"/>
<dbReference type="PDBsum" id="4FCS"/>
<dbReference type="PDBsum" id="4FDQ"/>
<dbReference type="PDBsum" id="4FEF"/>
<dbReference type="PDBsum" id="4G05"/>
<dbReference type="PDBsum" id="5ABN"/>
<dbReference type="PDBsum" id="5ABO"/>
<dbReference type="PDBsum" id="5ABQ"/>
<dbReference type="PDBsum" id="5FNB"/>
<dbReference type="PDBsum" id="5FNE"/>
<dbReference type="SMR" id="O94753"/>
<dbReference type="CAZy" id="AA2">
    <property type="family name" value="Auxiliary Activities 2"/>
</dbReference>
<dbReference type="PeroxiBase" id="2299">
    <property type="entry name" value="PerVP05-2_CBS613"/>
</dbReference>
<dbReference type="GlyCosmos" id="O94753">
    <property type="glycosylation" value="1 site, No reported glycans"/>
</dbReference>
<dbReference type="BioCyc" id="MetaCyc:MONOMER-14479"/>
<dbReference type="BRENDA" id="1.11.1.16">
    <property type="organism ID" value="4910"/>
</dbReference>
<dbReference type="BRENDA" id="1.11.1.7">
    <property type="organism ID" value="4910"/>
</dbReference>
<dbReference type="SABIO-RK" id="O94753"/>
<dbReference type="EvolutionaryTrace" id="O94753"/>
<dbReference type="GO" id="GO:0005576">
    <property type="term" value="C:extracellular region"/>
    <property type="evidence" value="ECO:0007669"/>
    <property type="project" value="UniProtKB-SubCell"/>
</dbReference>
<dbReference type="GO" id="GO:0020037">
    <property type="term" value="F:heme binding"/>
    <property type="evidence" value="ECO:0007669"/>
    <property type="project" value="InterPro"/>
</dbReference>
<dbReference type="GO" id="GO:0016689">
    <property type="term" value="F:manganese peroxidase activity"/>
    <property type="evidence" value="ECO:0007669"/>
    <property type="project" value="RHEA"/>
</dbReference>
<dbReference type="GO" id="GO:0046872">
    <property type="term" value="F:metal ion binding"/>
    <property type="evidence" value="ECO:0007669"/>
    <property type="project" value="UniProtKB-KW"/>
</dbReference>
<dbReference type="GO" id="GO:0052750">
    <property type="term" value="F:reactive-black-5:hydrogen-peroxide oxidoreductase activity"/>
    <property type="evidence" value="ECO:0007669"/>
    <property type="project" value="UniProtKB-EC"/>
</dbReference>
<dbReference type="GO" id="GO:0034599">
    <property type="term" value="P:cellular response to oxidative stress"/>
    <property type="evidence" value="ECO:0007669"/>
    <property type="project" value="InterPro"/>
</dbReference>
<dbReference type="GO" id="GO:0042744">
    <property type="term" value="P:hydrogen peroxide catabolic process"/>
    <property type="evidence" value="ECO:0007669"/>
    <property type="project" value="UniProtKB-KW"/>
</dbReference>
<dbReference type="GO" id="GO:0046274">
    <property type="term" value="P:lignin catabolic process"/>
    <property type="evidence" value="ECO:0007669"/>
    <property type="project" value="UniProtKB-KW"/>
</dbReference>
<dbReference type="GO" id="GO:0000302">
    <property type="term" value="P:response to reactive oxygen species"/>
    <property type="evidence" value="ECO:0007669"/>
    <property type="project" value="TreeGrafter"/>
</dbReference>
<dbReference type="CDD" id="cd00692">
    <property type="entry name" value="ligninase"/>
    <property type="match status" value="1"/>
</dbReference>
<dbReference type="Gene3D" id="1.10.520.10">
    <property type="match status" value="1"/>
</dbReference>
<dbReference type="Gene3D" id="1.10.420.10">
    <property type="entry name" value="Peroxidase, domain 2"/>
    <property type="match status" value="1"/>
</dbReference>
<dbReference type="InterPro" id="IPR044831">
    <property type="entry name" value="Ccp1-like"/>
</dbReference>
<dbReference type="InterPro" id="IPR002016">
    <property type="entry name" value="Haem_peroxidase"/>
</dbReference>
<dbReference type="InterPro" id="IPR010255">
    <property type="entry name" value="Haem_peroxidase_sf"/>
</dbReference>
<dbReference type="InterPro" id="IPR001621">
    <property type="entry name" value="Ligninase"/>
</dbReference>
<dbReference type="InterPro" id="IPR024589">
    <property type="entry name" value="Ligninase_C"/>
</dbReference>
<dbReference type="InterPro" id="IPR019794">
    <property type="entry name" value="Peroxidases_AS"/>
</dbReference>
<dbReference type="InterPro" id="IPR019793">
    <property type="entry name" value="Peroxidases_heam-ligand_BS"/>
</dbReference>
<dbReference type="PANTHER" id="PTHR31356:SF66">
    <property type="entry name" value="CATALASE-PEROXIDASE"/>
    <property type="match status" value="1"/>
</dbReference>
<dbReference type="PANTHER" id="PTHR31356">
    <property type="entry name" value="THYLAKOID LUMENAL 29 KDA PROTEIN, CHLOROPLASTIC-RELATED"/>
    <property type="match status" value="1"/>
</dbReference>
<dbReference type="Pfam" id="PF00141">
    <property type="entry name" value="peroxidase"/>
    <property type="match status" value="1"/>
</dbReference>
<dbReference type="Pfam" id="PF11895">
    <property type="entry name" value="Peroxidase_ext"/>
    <property type="match status" value="1"/>
</dbReference>
<dbReference type="PRINTS" id="PR00462">
    <property type="entry name" value="LIGNINASE"/>
</dbReference>
<dbReference type="PRINTS" id="PR00458">
    <property type="entry name" value="PEROXIDASE"/>
</dbReference>
<dbReference type="SUPFAM" id="SSF48113">
    <property type="entry name" value="Heme-dependent peroxidases"/>
    <property type="match status" value="1"/>
</dbReference>
<dbReference type="PROSITE" id="PS00435">
    <property type="entry name" value="PEROXIDASE_1"/>
    <property type="match status" value="1"/>
</dbReference>
<dbReference type="PROSITE" id="PS00436">
    <property type="entry name" value="PEROXIDASE_2"/>
    <property type="match status" value="1"/>
</dbReference>
<dbReference type="PROSITE" id="PS50873">
    <property type="entry name" value="PEROXIDASE_4"/>
    <property type="match status" value="1"/>
</dbReference>
<evidence type="ECO:0000250" key="1"/>
<evidence type="ECO:0000255" key="2"/>
<evidence type="ECO:0000255" key="3">
    <source>
        <dbReference type="PROSITE-ProRule" id="PRU00297"/>
    </source>
</evidence>
<evidence type="ECO:0000255" key="4">
    <source>
        <dbReference type="PROSITE-ProRule" id="PRU10012"/>
    </source>
</evidence>
<evidence type="ECO:0000269" key="5">
    <source>
    </source>
</evidence>
<evidence type="ECO:0000269" key="6">
    <source>
    </source>
</evidence>
<evidence type="ECO:0000269" key="7">
    <source>
    </source>
</evidence>
<evidence type="ECO:0000305" key="8"/>
<evidence type="ECO:0007829" key="9">
    <source>
        <dbReference type="PDB" id="3FMU"/>
    </source>
</evidence>
<evidence type="ECO:0007829" key="10">
    <source>
        <dbReference type="PDB" id="5ABN"/>
    </source>
</evidence>
<evidence type="ECO:0007829" key="11">
    <source>
        <dbReference type="PDB" id="5ABO"/>
    </source>
</evidence>
<evidence type="ECO:0007829" key="12">
    <source>
        <dbReference type="PDB" id="5FNB"/>
    </source>
</evidence>
<evidence type="ECO:0007829" key="13">
    <source>
        <dbReference type="PDB" id="5FNE"/>
    </source>
</evidence>